<gene>
    <name evidence="1" type="primary">PIM1</name>
    <name type="ordered locus">AFR013C</name>
</gene>
<comment type="function">
    <text evidence="1">ATP-dependent serine protease that mediates the selective degradation of misfolded, unassembled or oxidatively damaged polypeptides as well as certain short-lived regulatory proteins in the mitochondrial matrix. May also have a chaperone function in the assembly of inner membrane protein complexes. Participates in the regulation of mitochondrial gene expression and in the maintenance of the integrity of the mitochondrial genome. Binds to mitochondrial DNA in a site-specific manner.</text>
</comment>
<comment type="catalytic activity">
    <reaction evidence="1">
        <text>Hydrolysis of proteins in presence of ATP.</text>
        <dbReference type="EC" id="3.4.21.53"/>
    </reaction>
</comment>
<comment type="subunit">
    <text evidence="1">Homohexamer or homoheptamer. Organized in a ring with a central cavity.</text>
</comment>
<comment type="subcellular location">
    <subcellularLocation>
        <location evidence="1">Mitochondrion matrix</location>
    </subcellularLocation>
</comment>
<comment type="similarity">
    <text evidence="1">Belongs to the peptidase S16 family.</text>
</comment>
<name>LONM_EREGS</name>
<feature type="transit peptide" description="Mitochondrion" evidence="1">
    <location>
        <begin position="1"/>
        <end position="47"/>
    </location>
</feature>
<feature type="chain" id="PRO_0000395771" description="Lon protease homolog, mitochondrial">
    <location>
        <begin position="48"/>
        <end position="1058"/>
    </location>
</feature>
<feature type="domain" description="Lon N-terminal" evidence="3">
    <location>
        <begin position="158"/>
        <end position="412"/>
    </location>
</feature>
<feature type="domain" description="Lon proteolytic" evidence="2">
    <location>
        <begin position="844"/>
        <end position="1030"/>
    </location>
</feature>
<feature type="region of interest" description="Disordered" evidence="4">
    <location>
        <begin position="72"/>
        <end position="151"/>
    </location>
</feature>
<feature type="region of interest" description="Disordered" evidence="4">
    <location>
        <begin position="778"/>
        <end position="814"/>
    </location>
</feature>
<feature type="compositionally biased region" description="Basic and acidic residues" evidence="4">
    <location>
        <begin position="78"/>
        <end position="97"/>
    </location>
</feature>
<feature type="compositionally biased region" description="Basic and acidic residues" evidence="4">
    <location>
        <begin position="106"/>
        <end position="118"/>
    </location>
</feature>
<feature type="compositionally biased region" description="Gly residues" evidence="4">
    <location>
        <begin position="129"/>
        <end position="142"/>
    </location>
</feature>
<feature type="active site" evidence="1">
    <location>
        <position position="936"/>
    </location>
</feature>
<feature type="active site" evidence="1">
    <location>
        <position position="979"/>
    </location>
</feature>
<feature type="binding site" evidence="1">
    <location>
        <begin position="564"/>
        <end position="571"/>
    </location>
    <ligand>
        <name>ATP</name>
        <dbReference type="ChEBI" id="CHEBI:30616"/>
    </ligand>
</feature>
<accession>Q754Q9</accession>
<sequence length="1058" mass="116150">MLTRIRNAGVGGNAARRVRLLAGYTGARMAHAAALNSTTGAGGAARAAGAGRRAHSDVHVWALRQQSGIHRGGQCILKQDREPDQSDDKKVPPRAEEGRDEEAVRDEEAERQPREEQANRSSEASSSRGSGGSASSAGGGGRSNPPSEGEVPRKYEELMVLPMSNRPLFPGYYKSVTVYDPAVIEAICGLLRRNIPYLGAFLLKDRSMDKDSIDSIEEVHRVGVFAQITSVHHGVDVDGRKAMSMVLYPHRRVQLDELVSTPKLVAEAKEKATDDGLVQAKKEKFRDMSEGGEEEENPTEFLLETGVTVGNFSDHLDLPVDHSSVMLNALTSETLNTFKHLSSINATVKQQLIALSSITTSLKPNIFESPSLLADFAAAISVGDPNELQDVLETRDVEQRLEKALVFIKKEVYVAELQQKIEKETDAKVQKRYKDQVLTEQMRGIKKEMGVEDAKDKAIATFRERAEKLKFPEHVKKIFDEELARLSGLESAMSEYSVTKNYLDWITSLPWGIASTDQYSILSARKVLDNDHYGMQDVKDRILEFIAVGKLKGQIDGKIICLVGPPGVGKTSIGQSISRALNRTFFRFSVGGMSDVSEIKGHRRTYIGALPGRLIHALKRCQTENPLILIDEIDKLGRTGHQGDPASALLELLDPEQNKTFLDTYLDFPVDMSKVLFVCTANTLDTIPRPLLDRMEVIELSGYVADEKVKIAERHLIPAAKKSTGLGSANINLTSDSIVALLKNYCRESGVRSLKKHIEKIYRKAALKIVQQLSIDDTPKSAPAETNIEPENGKPDASAKPLTNNLPAPEPLNIPDSVKIDITPETLVEYLGPPVFTADRIYEKTPAGVVMGLAYTYLGGCTMYVESVLGQPLSKDSNPSLEHTGQLGDVMKESSRLAYSFSKMFMSRRFPNNRFFEKAAIHLHCPEGATPKDGPSAGITMASSLLSLAMNKPLDPTIAMTGELTLTGKVLRIGGIKEKTVAAKRSGAKTIIFPKDNMADWEDLPAHVKEGLIPVAAEWYDDVFNVLFGSVTEEEGNNVWKDQFDLIERSKATASSSN</sequence>
<evidence type="ECO:0000255" key="1">
    <source>
        <dbReference type="HAMAP-Rule" id="MF_03120"/>
    </source>
</evidence>
<evidence type="ECO:0000255" key="2">
    <source>
        <dbReference type="PROSITE-ProRule" id="PRU01122"/>
    </source>
</evidence>
<evidence type="ECO:0000255" key="3">
    <source>
        <dbReference type="PROSITE-ProRule" id="PRU01123"/>
    </source>
</evidence>
<evidence type="ECO:0000256" key="4">
    <source>
        <dbReference type="SAM" id="MobiDB-lite"/>
    </source>
</evidence>
<dbReference type="EC" id="3.4.21.53" evidence="1"/>
<dbReference type="EMBL" id="AE016819">
    <property type="protein sequence ID" value="AAS53384.2"/>
    <property type="molecule type" value="Genomic_DNA"/>
</dbReference>
<dbReference type="RefSeq" id="NP_985560.2">
    <property type="nucleotide sequence ID" value="NM_210914.2"/>
</dbReference>
<dbReference type="SMR" id="Q754Q9"/>
<dbReference type="FunCoup" id="Q754Q9">
    <property type="interactions" value="1030"/>
</dbReference>
<dbReference type="STRING" id="284811.Q754Q9"/>
<dbReference type="MEROPS" id="S16.010"/>
<dbReference type="EnsemblFungi" id="AAS53384">
    <property type="protein sequence ID" value="AAS53384"/>
    <property type="gene ID" value="AGOS_AFR013C"/>
</dbReference>
<dbReference type="GeneID" id="4621799"/>
<dbReference type="KEGG" id="ago:AGOS_AFR013C"/>
<dbReference type="eggNOG" id="KOG2004">
    <property type="taxonomic scope" value="Eukaryota"/>
</dbReference>
<dbReference type="HOGENOM" id="CLU_004109_1_0_1"/>
<dbReference type="InParanoid" id="Q754Q9"/>
<dbReference type="OMA" id="WLTNIPW"/>
<dbReference type="OrthoDB" id="2411602at2759"/>
<dbReference type="Proteomes" id="UP000000591">
    <property type="component" value="Chromosome VI"/>
</dbReference>
<dbReference type="GO" id="GO:0005759">
    <property type="term" value="C:mitochondrial matrix"/>
    <property type="evidence" value="ECO:0000318"/>
    <property type="project" value="GO_Central"/>
</dbReference>
<dbReference type="GO" id="GO:0005524">
    <property type="term" value="F:ATP binding"/>
    <property type="evidence" value="ECO:0007669"/>
    <property type="project" value="UniProtKB-UniRule"/>
</dbReference>
<dbReference type="GO" id="GO:0016887">
    <property type="term" value="F:ATP hydrolysis activity"/>
    <property type="evidence" value="ECO:0007669"/>
    <property type="project" value="UniProtKB-UniRule"/>
</dbReference>
<dbReference type="GO" id="GO:0004176">
    <property type="term" value="F:ATP-dependent peptidase activity"/>
    <property type="evidence" value="ECO:0000318"/>
    <property type="project" value="GO_Central"/>
</dbReference>
<dbReference type="GO" id="GO:0043565">
    <property type="term" value="F:sequence-specific DNA binding"/>
    <property type="evidence" value="ECO:0007669"/>
    <property type="project" value="UniProtKB-UniRule"/>
</dbReference>
<dbReference type="GO" id="GO:0004252">
    <property type="term" value="F:serine-type endopeptidase activity"/>
    <property type="evidence" value="ECO:0007669"/>
    <property type="project" value="UniProtKB-UniRule"/>
</dbReference>
<dbReference type="GO" id="GO:0003697">
    <property type="term" value="F:single-stranded DNA binding"/>
    <property type="evidence" value="ECO:0000318"/>
    <property type="project" value="GO_Central"/>
</dbReference>
<dbReference type="GO" id="GO:0034599">
    <property type="term" value="P:cellular response to oxidative stress"/>
    <property type="evidence" value="ECO:0007669"/>
    <property type="project" value="UniProtKB-UniRule"/>
</dbReference>
<dbReference type="GO" id="GO:0051131">
    <property type="term" value="P:chaperone-mediated protein complex assembly"/>
    <property type="evidence" value="ECO:0000318"/>
    <property type="project" value="GO_Central"/>
</dbReference>
<dbReference type="GO" id="GO:0141164">
    <property type="term" value="P:mitochondrial protein quality control"/>
    <property type="evidence" value="ECO:0007669"/>
    <property type="project" value="EnsemblFungi"/>
</dbReference>
<dbReference type="GO" id="GO:0007005">
    <property type="term" value="P:mitochondrion organization"/>
    <property type="evidence" value="ECO:0000318"/>
    <property type="project" value="GO_Central"/>
</dbReference>
<dbReference type="GO" id="GO:0070407">
    <property type="term" value="P:oxidation-dependent protein catabolic process"/>
    <property type="evidence" value="ECO:0007669"/>
    <property type="project" value="UniProtKB-UniRule"/>
</dbReference>
<dbReference type="GO" id="GO:0006515">
    <property type="term" value="P:protein quality control for misfolded or incompletely synthesized proteins"/>
    <property type="evidence" value="ECO:0000318"/>
    <property type="project" value="GO_Central"/>
</dbReference>
<dbReference type="GO" id="GO:1901858">
    <property type="term" value="P:regulation of mitochondrial DNA metabolic process"/>
    <property type="evidence" value="ECO:0007669"/>
    <property type="project" value="EnsemblFungi"/>
</dbReference>
<dbReference type="CDD" id="cd19500">
    <property type="entry name" value="RecA-like_Lon"/>
    <property type="match status" value="1"/>
</dbReference>
<dbReference type="FunFam" id="3.40.50.300:FF:000021">
    <property type="entry name" value="Lon protease homolog"/>
    <property type="match status" value="1"/>
</dbReference>
<dbReference type="FunFam" id="1.20.5.5270:FF:000001">
    <property type="entry name" value="Lon protease homolog, mitochondrial"/>
    <property type="match status" value="1"/>
</dbReference>
<dbReference type="FunFam" id="2.30.130.40:FF:000010">
    <property type="entry name" value="Lon protease homolog, mitochondrial"/>
    <property type="match status" value="1"/>
</dbReference>
<dbReference type="FunFam" id="3.30.230.10:FF:000015">
    <property type="entry name" value="Lon protease homolog, mitochondrial"/>
    <property type="match status" value="1"/>
</dbReference>
<dbReference type="Gene3D" id="1.10.8.60">
    <property type="match status" value="1"/>
</dbReference>
<dbReference type="Gene3D" id="1.20.5.5270">
    <property type="match status" value="1"/>
</dbReference>
<dbReference type="Gene3D" id="1.20.58.1480">
    <property type="match status" value="1"/>
</dbReference>
<dbReference type="Gene3D" id="3.30.230.10">
    <property type="match status" value="1"/>
</dbReference>
<dbReference type="Gene3D" id="2.30.130.40">
    <property type="entry name" value="LON domain-like"/>
    <property type="match status" value="1"/>
</dbReference>
<dbReference type="Gene3D" id="3.40.50.300">
    <property type="entry name" value="P-loop containing nucleotide triphosphate hydrolases"/>
    <property type="match status" value="1"/>
</dbReference>
<dbReference type="HAMAP" id="MF_03120">
    <property type="entry name" value="lonm_euk"/>
    <property type="match status" value="1"/>
</dbReference>
<dbReference type="InterPro" id="IPR003593">
    <property type="entry name" value="AAA+_ATPase"/>
</dbReference>
<dbReference type="InterPro" id="IPR003959">
    <property type="entry name" value="ATPase_AAA_core"/>
</dbReference>
<dbReference type="InterPro" id="IPR004815">
    <property type="entry name" value="Lon_bac/euk-typ"/>
</dbReference>
<dbReference type="InterPro" id="IPR054594">
    <property type="entry name" value="Lon_lid"/>
</dbReference>
<dbReference type="InterPro" id="IPR008269">
    <property type="entry name" value="Lon_proteolytic"/>
</dbReference>
<dbReference type="InterPro" id="IPR027065">
    <property type="entry name" value="Lon_Prtase"/>
</dbReference>
<dbReference type="InterPro" id="IPR003111">
    <property type="entry name" value="Lon_prtase_N"/>
</dbReference>
<dbReference type="InterPro" id="IPR046336">
    <property type="entry name" value="Lon_prtase_N_sf"/>
</dbReference>
<dbReference type="InterPro" id="IPR027503">
    <property type="entry name" value="Lonm_euk"/>
</dbReference>
<dbReference type="InterPro" id="IPR027417">
    <property type="entry name" value="P-loop_NTPase"/>
</dbReference>
<dbReference type="InterPro" id="IPR008268">
    <property type="entry name" value="Peptidase_S16_AS"/>
</dbReference>
<dbReference type="InterPro" id="IPR015947">
    <property type="entry name" value="PUA-like_sf"/>
</dbReference>
<dbReference type="InterPro" id="IPR020568">
    <property type="entry name" value="Ribosomal_Su5_D2-typ_SF"/>
</dbReference>
<dbReference type="InterPro" id="IPR014721">
    <property type="entry name" value="Ribsml_uS5_D2-typ_fold_subgr"/>
</dbReference>
<dbReference type="NCBIfam" id="TIGR00763">
    <property type="entry name" value="lon"/>
    <property type="match status" value="1"/>
</dbReference>
<dbReference type="PANTHER" id="PTHR43718">
    <property type="entry name" value="LON PROTEASE"/>
    <property type="match status" value="1"/>
</dbReference>
<dbReference type="PANTHER" id="PTHR43718:SF2">
    <property type="entry name" value="LON PROTEASE HOMOLOG, MITOCHONDRIAL"/>
    <property type="match status" value="1"/>
</dbReference>
<dbReference type="Pfam" id="PF00004">
    <property type="entry name" value="AAA"/>
    <property type="match status" value="1"/>
</dbReference>
<dbReference type="Pfam" id="PF05362">
    <property type="entry name" value="Lon_C"/>
    <property type="match status" value="1"/>
</dbReference>
<dbReference type="Pfam" id="PF22667">
    <property type="entry name" value="Lon_lid"/>
    <property type="match status" value="1"/>
</dbReference>
<dbReference type="Pfam" id="PF02190">
    <property type="entry name" value="LON_substr_bdg"/>
    <property type="match status" value="1"/>
</dbReference>
<dbReference type="PRINTS" id="PR00830">
    <property type="entry name" value="ENDOLAPTASE"/>
</dbReference>
<dbReference type="SMART" id="SM00382">
    <property type="entry name" value="AAA"/>
    <property type="match status" value="1"/>
</dbReference>
<dbReference type="SMART" id="SM00464">
    <property type="entry name" value="LON"/>
    <property type="match status" value="1"/>
</dbReference>
<dbReference type="SUPFAM" id="SSF52540">
    <property type="entry name" value="P-loop containing nucleoside triphosphate hydrolases"/>
    <property type="match status" value="1"/>
</dbReference>
<dbReference type="SUPFAM" id="SSF88697">
    <property type="entry name" value="PUA domain-like"/>
    <property type="match status" value="1"/>
</dbReference>
<dbReference type="SUPFAM" id="SSF54211">
    <property type="entry name" value="Ribosomal protein S5 domain 2-like"/>
    <property type="match status" value="1"/>
</dbReference>
<dbReference type="PROSITE" id="PS51787">
    <property type="entry name" value="LON_N"/>
    <property type="match status" value="1"/>
</dbReference>
<dbReference type="PROSITE" id="PS51786">
    <property type="entry name" value="LON_PROTEOLYTIC"/>
    <property type="match status" value="1"/>
</dbReference>
<dbReference type="PROSITE" id="PS01046">
    <property type="entry name" value="LON_SER"/>
    <property type="match status" value="1"/>
</dbReference>
<keyword id="KW-0067">ATP-binding</keyword>
<keyword id="KW-0238">DNA-binding</keyword>
<keyword id="KW-0378">Hydrolase</keyword>
<keyword id="KW-0496">Mitochondrion</keyword>
<keyword id="KW-0547">Nucleotide-binding</keyword>
<keyword id="KW-0645">Protease</keyword>
<keyword id="KW-1185">Reference proteome</keyword>
<keyword id="KW-0720">Serine protease</keyword>
<keyword id="KW-0809">Transit peptide</keyword>
<protein>
    <recommendedName>
        <fullName evidence="1">Lon protease homolog, mitochondrial</fullName>
        <ecNumber evidence="1">3.4.21.53</ecNumber>
    </recommendedName>
</protein>
<reference key="1">
    <citation type="journal article" date="2004" name="Science">
        <title>The Ashbya gossypii genome as a tool for mapping the ancient Saccharomyces cerevisiae genome.</title>
        <authorList>
            <person name="Dietrich F.S."/>
            <person name="Voegeli S."/>
            <person name="Brachat S."/>
            <person name="Lerch A."/>
            <person name="Gates K."/>
            <person name="Steiner S."/>
            <person name="Mohr C."/>
            <person name="Poehlmann R."/>
            <person name="Luedi P."/>
            <person name="Choi S."/>
            <person name="Wing R.A."/>
            <person name="Flavier A."/>
            <person name="Gaffney T.D."/>
            <person name="Philippsen P."/>
        </authorList>
    </citation>
    <scope>NUCLEOTIDE SEQUENCE [LARGE SCALE GENOMIC DNA]</scope>
    <source>
        <strain>ATCC 10895 / CBS 109.51 / FGSC 9923 / NRRL Y-1056</strain>
    </source>
</reference>
<reference key="2">
    <citation type="journal article" date="2013" name="G3 (Bethesda)">
        <title>Genomes of Ashbya fungi isolated from insects reveal four mating-type loci, numerous translocations, lack of transposons, and distinct gene duplications.</title>
        <authorList>
            <person name="Dietrich F.S."/>
            <person name="Voegeli S."/>
            <person name="Kuo S."/>
            <person name="Philippsen P."/>
        </authorList>
    </citation>
    <scope>GENOME REANNOTATION</scope>
    <scope>SEQUENCE REVISION TO 583; 588; 590 AND 612-619</scope>
    <source>
        <strain>ATCC 10895 / CBS 109.51 / FGSC 9923 / NRRL Y-1056</strain>
    </source>
</reference>
<organism>
    <name type="scientific">Eremothecium gossypii (strain ATCC 10895 / CBS 109.51 / FGSC 9923 / NRRL Y-1056)</name>
    <name type="common">Yeast</name>
    <name type="synonym">Ashbya gossypii</name>
    <dbReference type="NCBI Taxonomy" id="284811"/>
    <lineage>
        <taxon>Eukaryota</taxon>
        <taxon>Fungi</taxon>
        <taxon>Dikarya</taxon>
        <taxon>Ascomycota</taxon>
        <taxon>Saccharomycotina</taxon>
        <taxon>Saccharomycetes</taxon>
        <taxon>Saccharomycetales</taxon>
        <taxon>Saccharomycetaceae</taxon>
        <taxon>Eremothecium</taxon>
    </lineage>
</organism>
<proteinExistence type="inferred from homology"/>